<organism>
    <name type="scientific">Mus musculus</name>
    <name type="common">Mouse</name>
    <dbReference type="NCBI Taxonomy" id="10090"/>
    <lineage>
        <taxon>Eukaryota</taxon>
        <taxon>Metazoa</taxon>
        <taxon>Chordata</taxon>
        <taxon>Craniata</taxon>
        <taxon>Vertebrata</taxon>
        <taxon>Euteleostomi</taxon>
        <taxon>Mammalia</taxon>
        <taxon>Eutheria</taxon>
        <taxon>Euarchontoglires</taxon>
        <taxon>Glires</taxon>
        <taxon>Rodentia</taxon>
        <taxon>Myomorpha</taxon>
        <taxon>Muroidea</taxon>
        <taxon>Muridae</taxon>
        <taxon>Murinae</taxon>
        <taxon>Mus</taxon>
        <taxon>Mus</taxon>
    </lineage>
</organism>
<sequence>MASESSPLLAYRLLGEEGAAFPPNGAGVSGVPSSRKLSTFLGVVVPTVLSMFSIVVFLRIGFVVGHAGLLQALAMLLVAYIILALTVLSVCAIATNGAVRGGGAYFMISRTLGPEVGGSIGLMFYLANVCGCAVSLLGLVESILDVFGADATGSSGIQVLPQGYGWNLLYGSLLLGLVGGVCTLGAGLYARASFLTFLLVSGSLASVLVSFVAVGPRNIPLAPRPGTNASSVPHRHGHFTGFNGSTLRDNLGAGYAEDYTTGAMMTFASVFAVLFNGCTGIMAGANMSGELKDPSRAIPLGTIIAVAYTFFIYILLFFLSSFTCDRALLQEDYGFFRDISLWPPLVLIGIYATALSASMSSLIGASRILHALAQDDLFGVILAPAKVVSGGGNPWGAVLYSWGLVQLVLLAGKLNTLAAVVTVFYLVAYAAVDLSCLSLEWASAPNFRPTFSLFSWHTCLLGVASCLLMMFLISPGAAGGSLLLMGLLSALLTARGGPSSWGYVSQALLFHQVRKYLLRLDVRKEHVKFWRPQLLLLVGNPRGALPLLRLANQLKKGGLYVLGHVTLGDLDSLPSDPVQPQYGAWLSLVDLAQVKAFVDLTLSPSVRQGAQHLLRISGLGGMKPNTLVLGFYDDAPPQDHFLTDPAFSEPAEGTREGGSPALSTLFPPPRAPGSPRALSPQDYVATVADALKMNKNVVLARACGALPPERLSRGSSSSAQLHHVDVWPLNLLRPRGGPGYVDVCGLFLLQMATILSMVPAWHSARLRIFLCLGPREAPGAAEGRLRALLSQLRIRAEVQEVVWGEGAETGEPEEEEGDFVNGGRGDEEAEALACSANALVRAQQGRGTVGGPGGPEGRDGEEGPTTALTFLYLPRPPADPARYPRYLALLETLSRDLGPTLLIHGVTPVTCTDL</sequence>
<protein>
    <recommendedName>
        <fullName>Solute carrier family 12 member 9</fullName>
    </recommendedName>
    <alternativeName>
        <fullName>Cation-chloride cotransporter-interacting protein 1</fullName>
    </alternativeName>
    <alternativeName>
        <fullName>Potassium-chloride transporter 9</fullName>
    </alternativeName>
</protein>
<proteinExistence type="evidence at protein level"/>
<evidence type="ECO:0000250" key="1">
    <source>
        <dbReference type="UniProtKB" id="Q9BXP2"/>
    </source>
</evidence>
<evidence type="ECO:0000255" key="2"/>
<evidence type="ECO:0000256" key="3">
    <source>
        <dbReference type="SAM" id="MobiDB-lite"/>
    </source>
</evidence>
<evidence type="ECO:0000269" key="4">
    <source>
    </source>
</evidence>
<evidence type="ECO:0000305" key="5"/>
<comment type="function">
    <text evidence="1">May be an inhibitor of SLC12A1. Seems to correspond to a subunit of a multimeric transport system and thus, additional subunits may be required for its function. May play a role in lysosomal ion flux and osmoregulation.</text>
</comment>
<comment type="subunit">
    <text evidence="1">Interacts with SLC12A1.</text>
</comment>
<comment type="subcellular location">
    <subcellularLocation>
        <location evidence="1">Cell membrane</location>
        <topology evidence="1">Multi-pass membrane protein</topology>
    </subcellularLocation>
    <subcellularLocation>
        <location evidence="1">Lysosome membrane</location>
    </subcellularLocation>
</comment>
<comment type="similarity">
    <text evidence="5">Belongs to the SLC12A transporter family.</text>
</comment>
<name>S12A9_MOUSE</name>
<gene>
    <name type="primary">Slc12a9</name>
    <name type="synonym">Cip1</name>
    <name type="synonym">Slc12a8</name>
</gene>
<dbReference type="EMBL" id="AF312033">
    <property type="protein sequence ID" value="AAK28822.1"/>
    <property type="molecule type" value="Genomic_DNA"/>
</dbReference>
<dbReference type="EMBL" id="AF314957">
    <property type="protein sequence ID" value="AAL26866.1"/>
    <property type="molecule type" value="mRNA"/>
</dbReference>
<dbReference type="EMBL" id="AC150682">
    <property type="status" value="NOT_ANNOTATED_CDS"/>
    <property type="molecule type" value="Genomic_DNA"/>
</dbReference>
<dbReference type="EMBL" id="BC046982">
    <property type="protein sequence ID" value="AAH46982.1"/>
    <property type="molecule type" value="mRNA"/>
</dbReference>
<dbReference type="CCDS" id="CCDS19766.1"/>
<dbReference type="RefSeq" id="NP_001346540.1">
    <property type="nucleotide sequence ID" value="NM_001359611.1"/>
</dbReference>
<dbReference type="RefSeq" id="NP_113583.2">
    <property type="nucleotide sequence ID" value="NM_031406.3"/>
</dbReference>
<dbReference type="RefSeq" id="XP_006504696.1">
    <property type="nucleotide sequence ID" value="XM_006504633.3"/>
</dbReference>
<dbReference type="RefSeq" id="XP_030110791.1">
    <property type="nucleotide sequence ID" value="XM_030254931.2"/>
</dbReference>
<dbReference type="RefSeq" id="XP_030110792.1">
    <property type="nucleotide sequence ID" value="XM_030254932.2"/>
</dbReference>
<dbReference type="RefSeq" id="XP_030110793.1">
    <property type="nucleotide sequence ID" value="XM_030254933.2"/>
</dbReference>
<dbReference type="RefSeq" id="XP_030110794.1">
    <property type="nucleotide sequence ID" value="XM_030254934.2"/>
</dbReference>
<dbReference type="RefSeq" id="XP_030110795.1">
    <property type="nucleotide sequence ID" value="XM_030254935.2"/>
</dbReference>
<dbReference type="RefSeq" id="XP_030110796.1">
    <property type="nucleotide sequence ID" value="XM_030254936.1"/>
</dbReference>
<dbReference type="RefSeq" id="XP_030110797.1">
    <property type="nucleotide sequence ID" value="XM_030254937.2"/>
</dbReference>
<dbReference type="RefSeq" id="XP_030110798.1">
    <property type="nucleotide sequence ID" value="XM_030254938.2"/>
</dbReference>
<dbReference type="RefSeq" id="XP_036021527.1">
    <property type="nucleotide sequence ID" value="XM_036165634.1"/>
</dbReference>
<dbReference type="SMR" id="Q99MR3"/>
<dbReference type="BioGRID" id="219968">
    <property type="interactions" value="1"/>
</dbReference>
<dbReference type="FunCoup" id="Q99MR3">
    <property type="interactions" value="405"/>
</dbReference>
<dbReference type="STRING" id="10090.ENSMUSP00000038106"/>
<dbReference type="GlyConnect" id="2732">
    <property type="glycosylation" value="5 N-Linked glycans (2 sites)"/>
</dbReference>
<dbReference type="GlyCosmos" id="Q99MR3">
    <property type="glycosylation" value="2 sites, 5 glycans"/>
</dbReference>
<dbReference type="GlyGen" id="Q99MR3">
    <property type="glycosylation" value="4 sites, 7 N-linked glycans (2 sites), 1 O-linked glycan (1 site)"/>
</dbReference>
<dbReference type="iPTMnet" id="Q99MR3"/>
<dbReference type="PhosphoSitePlus" id="Q99MR3"/>
<dbReference type="SwissPalm" id="Q99MR3"/>
<dbReference type="jPOST" id="Q99MR3"/>
<dbReference type="PaxDb" id="10090-ENSMUSP00000038106"/>
<dbReference type="PeptideAtlas" id="Q99MR3"/>
<dbReference type="ProteomicsDB" id="253345"/>
<dbReference type="Pumba" id="Q99MR3"/>
<dbReference type="Antibodypedia" id="74017">
    <property type="antibodies" value="33 antibodies from 9 providers"/>
</dbReference>
<dbReference type="DNASU" id="83704"/>
<dbReference type="Ensembl" id="ENSMUST00000039991.14">
    <property type="protein sequence ID" value="ENSMUSP00000038106.8"/>
    <property type="gene ID" value="ENSMUSG00000037344.15"/>
</dbReference>
<dbReference type="GeneID" id="83704"/>
<dbReference type="KEGG" id="mmu:83704"/>
<dbReference type="UCSC" id="uc009ace.2">
    <property type="organism name" value="mouse"/>
</dbReference>
<dbReference type="AGR" id="MGI:1933532"/>
<dbReference type="CTD" id="56996"/>
<dbReference type="MGI" id="MGI:1933532">
    <property type="gene designation" value="Slc12a9"/>
</dbReference>
<dbReference type="VEuPathDB" id="HostDB:ENSMUSG00000037344"/>
<dbReference type="eggNOG" id="KOG1288">
    <property type="taxonomic scope" value="Eukaryota"/>
</dbReference>
<dbReference type="GeneTree" id="ENSGT00940000159400"/>
<dbReference type="HOGENOM" id="CLU_001883_3_0_1"/>
<dbReference type="InParanoid" id="Q99MR3"/>
<dbReference type="OMA" id="NIKYWRP"/>
<dbReference type="OrthoDB" id="2020542at2759"/>
<dbReference type="PhylomeDB" id="Q99MR3"/>
<dbReference type="TreeFam" id="TF313191"/>
<dbReference type="BioGRID-ORCS" id="83704">
    <property type="hits" value="6 hits in 79 CRISPR screens"/>
</dbReference>
<dbReference type="ChiTaRS" id="Slc12a9">
    <property type="organism name" value="mouse"/>
</dbReference>
<dbReference type="PRO" id="PR:Q99MR3"/>
<dbReference type="Proteomes" id="UP000000589">
    <property type="component" value="Chromosome 5"/>
</dbReference>
<dbReference type="RNAct" id="Q99MR3">
    <property type="molecule type" value="protein"/>
</dbReference>
<dbReference type="Bgee" id="ENSMUSG00000037344">
    <property type="expression patterns" value="Expressed in retinal neural layer and 240 other cell types or tissues"/>
</dbReference>
<dbReference type="ExpressionAtlas" id="Q99MR3">
    <property type="expression patterns" value="baseline and differential"/>
</dbReference>
<dbReference type="GO" id="GO:0005765">
    <property type="term" value="C:lysosomal membrane"/>
    <property type="evidence" value="ECO:0007669"/>
    <property type="project" value="UniProtKB-SubCell"/>
</dbReference>
<dbReference type="GO" id="GO:0016020">
    <property type="term" value="C:membrane"/>
    <property type="evidence" value="ECO:0000266"/>
    <property type="project" value="MGI"/>
</dbReference>
<dbReference type="GO" id="GO:0005886">
    <property type="term" value="C:plasma membrane"/>
    <property type="evidence" value="ECO:0007669"/>
    <property type="project" value="UniProtKB-SubCell"/>
</dbReference>
<dbReference type="GO" id="GO:0015377">
    <property type="term" value="F:chloride:monoatomic cation symporter activity"/>
    <property type="evidence" value="ECO:0007669"/>
    <property type="project" value="InterPro"/>
</dbReference>
<dbReference type="GO" id="GO:0046873">
    <property type="term" value="F:metal ion transmembrane transporter activity"/>
    <property type="evidence" value="ECO:0007669"/>
    <property type="project" value="UniProtKB-ARBA"/>
</dbReference>
<dbReference type="GO" id="GO:0098662">
    <property type="term" value="P:inorganic cation transmembrane transport"/>
    <property type="evidence" value="ECO:0007669"/>
    <property type="project" value="UniProtKB-ARBA"/>
</dbReference>
<dbReference type="FunFam" id="1.20.1740.10:FF:000013">
    <property type="entry name" value="Solute carrier family 12 member"/>
    <property type="match status" value="1"/>
</dbReference>
<dbReference type="Gene3D" id="1.20.1740.10">
    <property type="entry name" value="Amino acid/polyamine transporter I"/>
    <property type="match status" value="1"/>
</dbReference>
<dbReference type="InterPro" id="IPR004841">
    <property type="entry name" value="AA-permease/SLC12A_dom"/>
</dbReference>
<dbReference type="InterPro" id="IPR018491">
    <property type="entry name" value="SLC12_C"/>
</dbReference>
<dbReference type="InterPro" id="IPR004842">
    <property type="entry name" value="SLC12A_fam"/>
</dbReference>
<dbReference type="PANTHER" id="PTHR11827:SF98">
    <property type="entry name" value="SOLUTE CARRIER FAMILY 12 MEMBER 9"/>
    <property type="match status" value="1"/>
</dbReference>
<dbReference type="PANTHER" id="PTHR11827">
    <property type="entry name" value="SOLUTE CARRIER FAMILY 12, CATION COTRANSPORTERS"/>
    <property type="match status" value="1"/>
</dbReference>
<dbReference type="Pfam" id="PF00324">
    <property type="entry name" value="AA_permease"/>
    <property type="match status" value="1"/>
</dbReference>
<dbReference type="Pfam" id="PF03522">
    <property type="entry name" value="SLC12"/>
    <property type="match status" value="1"/>
</dbReference>
<keyword id="KW-1003">Cell membrane</keyword>
<keyword id="KW-0325">Glycoprotein</keyword>
<keyword id="KW-0458">Lysosome</keyword>
<keyword id="KW-0472">Membrane</keyword>
<keyword id="KW-0597">Phosphoprotein</keyword>
<keyword id="KW-1185">Reference proteome</keyword>
<keyword id="KW-0812">Transmembrane</keyword>
<keyword id="KW-1133">Transmembrane helix</keyword>
<keyword id="KW-0813">Transport</keyword>
<accession>Q99MR3</accession>
<accession>E9QNN4</accession>
<feature type="chain" id="PRO_0000331416" description="Solute carrier family 12 member 9">
    <location>
        <begin position="1"/>
        <end position="914"/>
    </location>
</feature>
<feature type="topological domain" description="Cytoplasmic" evidence="2">
    <location>
        <begin position="1"/>
        <end position="36"/>
    </location>
</feature>
<feature type="transmembrane region" description="Helical" evidence="2">
    <location>
        <begin position="37"/>
        <end position="57"/>
    </location>
</feature>
<feature type="topological domain" description="Extracellular" evidence="2">
    <location>
        <begin position="58"/>
        <end position="72"/>
    </location>
</feature>
<feature type="transmembrane region" description="Helical" evidence="2">
    <location>
        <begin position="73"/>
        <end position="93"/>
    </location>
</feature>
<feature type="topological domain" description="Cytoplasmic" evidence="2">
    <location>
        <begin position="94"/>
        <end position="119"/>
    </location>
</feature>
<feature type="transmembrane region" description="Helical" evidence="2">
    <location>
        <begin position="120"/>
        <end position="140"/>
    </location>
</feature>
<feature type="topological domain" description="Extracellular" evidence="2">
    <location>
        <begin position="141"/>
        <end position="167"/>
    </location>
</feature>
<feature type="transmembrane region" description="Helical" evidence="2">
    <location>
        <begin position="168"/>
        <end position="188"/>
    </location>
</feature>
<feature type="topological domain" description="Cytoplasmic" evidence="2">
    <location>
        <begin position="189"/>
        <end position="193"/>
    </location>
</feature>
<feature type="transmembrane region" description="Helical" evidence="2">
    <location>
        <begin position="194"/>
        <end position="214"/>
    </location>
</feature>
<feature type="topological domain" description="Extracellular" evidence="2">
    <location>
        <begin position="215"/>
        <end position="262"/>
    </location>
</feature>
<feature type="transmembrane region" description="Helical" evidence="2">
    <location>
        <begin position="263"/>
        <end position="283"/>
    </location>
</feature>
<feature type="topological domain" description="Cytoplasmic" evidence="2">
    <location>
        <begin position="284"/>
        <end position="297"/>
    </location>
</feature>
<feature type="transmembrane region" description="Helical" evidence="2">
    <location>
        <begin position="298"/>
        <end position="318"/>
    </location>
</feature>
<feature type="topological domain" description="Extracellular" evidence="2">
    <location>
        <begin position="319"/>
        <end position="338"/>
    </location>
</feature>
<feature type="transmembrane region" description="Helical" evidence="2">
    <location>
        <begin position="339"/>
        <end position="359"/>
    </location>
</feature>
<feature type="topological domain" description="Cytoplasmic" evidence="2">
    <location>
        <begin position="360"/>
        <end position="376"/>
    </location>
</feature>
<feature type="transmembrane region" description="Helical" evidence="2">
    <location>
        <begin position="377"/>
        <end position="399"/>
    </location>
</feature>
<feature type="topological domain" description="Extracellular" evidence="2">
    <location>
        <begin position="400"/>
        <end position="416"/>
    </location>
</feature>
<feature type="transmembrane region" description="Helical" evidence="2">
    <location>
        <begin position="417"/>
        <end position="437"/>
    </location>
</feature>
<feature type="topological domain" description="Cytoplasmic" evidence="2">
    <location>
        <begin position="438"/>
        <end position="466"/>
    </location>
</feature>
<feature type="transmembrane region" description="Helical" evidence="2">
    <location>
        <begin position="467"/>
        <end position="487"/>
    </location>
</feature>
<feature type="topological domain" description="Extracellular" evidence="2">
    <location>
        <begin position="488"/>
        <end position="740"/>
    </location>
</feature>
<feature type="transmembrane region" description="Helical" evidence="2">
    <location>
        <begin position="741"/>
        <end position="761"/>
    </location>
</feature>
<feature type="topological domain" description="Cytoplasmic" evidence="2">
    <location>
        <begin position="762"/>
        <end position="914"/>
    </location>
</feature>
<feature type="region of interest" description="Disordered" evidence="3">
    <location>
        <begin position="645"/>
        <end position="678"/>
    </location>
</feature>
<feature type="region of interest" description="Disordered" evidence="3">
    <location>
        <begin position="844"/>
        <end position="864"/>
    </location>
</feature>
<feature type="modified residue" description="Phosphoserine" evidence="1">
    <location>
        <position position="6"/>
    </location>
</feature>
<feature type="glycosylation site" description="N-linked (GlcNAc...) asparagine" evidence="4">
    <location>
        <position position="228"/>
    </location>
</feature>
<feature type="glycosylation site" description="N-linked (GlcNAc...) asparagine" evidence="4">
    <location>
        <position position="243"/>
    </location>
</feature>
<feature type="sequence conflict" description="In Ref. 1; AAK28822, 2; AAL26866 and 4; AAH46982." evidence="5" ref="1 2 4">
    <original>S</original>
    <variation>A</variation>
    <location>
        <position position="34"/>
    </location>
</feature>
<reference key="1">
    <citation type="journal article" date="2001" name="Nucleic Acids Res.">
        <title>Comparative analysis of the gene-dense ACHE/TFR2 region on human chromosome 7q22 with the orthologous region on mouse chromosome 5.</title>
        <authorList>
            <person name="Wilson M.D."/>
            <person name="Riemer C."/>
            <person name="Martindale D.W."/>
            <person name="Schnupf P."/>
            <person name="Boright A.P."/>
            <person name="Cheung T.L."/>
            <person name="Hardy D.M."/>
            <person name="Schwartz S."/>
            <person name="Scherer S.W."/>
            <person name="Tsui L.-C."/>
            <person name="Miller W."/>
            <person name="Koop B.F."/>
        </authorList>
    </citation>
    <scope>NUCLEOTIDE SEQUENCE [GENOMIC DNA]</scope>
    <source>
        <strain>129/Sv</strain>
    </source>
</reference>
<reference key="2">
    <citation type="submission" date="2000-10" db="EMBL/GenBank/DDBJ databases">
        <title>Cloning of mouse Slc12a8, a new member of the cation-chloride cotransporter gene family.</title>
        <authorList>
            <person name="Mount D.B."/>
        </authorList>
    </citation>
    <scope>NUCLEOTIDE SEQUENCE [MRNA]</scope>
    <source>
        <strain>FVB/N</strain>
    </source>
</reference>
<reference key="3">
    <citation type="journal article" date="2009" name="PLoS Biol.">
        <title>Lineage-specific biology revealed by a finished genome assembly of the mouse.</title>
        <authorList>
            <person name="Church D.M."/>
            <person name="Goodstadt L."/>
            <person name="Hillier L.W."/>
            <person name="Zody M.C."/>
            <person name="Goldstein S."/>
            <person name="She X."/>
            <person name="Bult C.J."/>
            <person name="Agarwala R."/>
            <person name="Cherry J.L."/>
            <person name="DiCuccio M."/>
            <person name="Hlavina W."/>
            <person name="Kapustin Y."/>
            <person name="Meric P."/>
            <person name="Maglott D."/>
            <person name="Birtle Z."/>
            <person name="Marques A.C."/>
            <person name="Graves T."/>
            <person name="Zhou S."/>
            <person name="Teague B."/>
            <person name="Potamousis K."/>
            <person name="Churas C."/>
            <person name="Place M."/>
            <person name="Herschleb J."/>
            <person name="Runnheim R."/>
            <person name="Forrest D."/>
            <person name="Amos-Landgraf J."/>
            <person name="Schwartz D.C."/>
            <person name="Cheng Z."/>
            <person name="Lindblad-Toh K."/>
            <person name="Eichler E.E."/>
            <person name="Ponting C.P."/>
        </authorList>
    </citation>
    <scope>NUCLEOTIDE SEQUENCE [LARGE SCALE GENOMIC DNA]</scope>
    <source>
        <strain>C57BL/6J</strain>
    </source>
</reference>
<reference key="4">
    <citation type="journal article" date="2004" name="Genome Res.">
        <title>The status, quality, and expansion of the NIH full-length cDNA project: the Mammalian Gene Collection (MGC).</title>
        <authorList>
            <consortium name="The MGC Project Team"/>
        </authorList>
    </citation>
    <scope>NUCLEOTIDE SEQUENCE [LARGE SCALE MRNA]</scope>
    <source>
        <strain>FVB/N</strain>
        <tissue>Colon</tissue>
    </source>
</reference>
<reference key="5">
    <citation type="journal article" date="2009" name="Nat. Biotechnol.">
        <title>Mass-spectrometric identification and relative quantification of N-linked cell surface glycoproteins.</title>
        <authorList>
            <person name="Wollscheid B."/>
            <person name="Bausch-Fluck D."/>
            <person name="Henderson C."/>
            <person name="O'Brien R."/>
            <person name="Bibel M."/>
            <person name="Schiess R."/>
            <person name="Aebersold R."/>
            <person name="Watts J.D."/>
        </authorList>
    </citation>
    <scope>GLYCOSYLATION [LARGE SCALE ANALYSIS] AT ASN-228 AND ASN-243</scope>
</reference>
<reference key="6">
    <citation type="journal article" date="2010" name="Cell">
        <title>A tissue-specific atlas of mouse protein phosphorylation and expression.</title>
        <authorList>
            <person name="Huttlin E.L."/>
            <person name="Jedrychowski M.P."/>
            <person name="Elias J.E."/>
            <person name="Goswami T."/>
            <person name="Rad R."/>
            <person name="Beausoleil S.A."/>
            <person name="Villen J."/>
            <person name="Haas W."/>
            <person name="Sowa M.E."/>
            <person name="Gygi S.P."/>
        </authorList>
    </citation>
    <scope>IDENTIFICATION BY MASS SPECTROMETRY [LARGE SCALE ANALYSIS]</scope>
    <source>
        <tissue>Brain</tissue>
        <tissue>Kidney</tissue>
        <tissue>Lung</tissue>
        <tissue>Spleen</tissue>
        <tissue>Testis</tissue>
    </source>
</reference>